<proteinExistence type="predicted"/>
<feature type="chain" id="PRO_0000408184" description="Protein ORF D">
    <location>
        <begin position="1"/>
        <end position="213"/>
    </location>
</feature>
<organismHost>
    <name type="scientific">Elephas maximus</name>
    <name type="common">Indian elephant</name>
    <dbReference type="NCBI Taxonomy" id="9783"/>
</organismHost>
<organismHost>
    <name type="scientific">Loxodonta africana</name>
    <name type="common">African elephant</name>
    <dbReference type="NCBI Taxonomy" id="9785"/>
</organismHost>
<organismHost>
    <name type="scientific">Loxodonta cyclotis</name>
    <name type="common">African forest elephant</name>
    <dbReference type="NCBI Taxonomy" id="99490"/>
</organismHost>
<name>ORFD_ELHVK</name>
<organism>
    <name type="scientific">Elephantid herpesvirus 1 (isolate Asian elephant/Berlin/Kiba/1998)</name>
    <name type="common">EIHV-1</name>
    <name type="synonym">Elephant endotheliotropic herpesvirus</name>
    <dbReference type="NCBI Taxonomy" id="654902"/>
    <lineage>
        <taxon>Viruses</taxon>
        <taxon>Duplodnaviria</taxon>
        <taxon>Heunggongvirae</taxon>
        <taxon>Peploviricota</taxon>
        <taxon>Herviviricetes</taxon>
        <taxon>Herpesvirales</taxon>
        <taxon>Orthoherpesviridae</taxon>
        <taxon>Betaherpesvirinae</taxon>
        <taxon>Proboscivirus</taxon>
        <taxon>Proboscivirus elephantidbeta1</taxon>
        <taxon>Elephantid herpesvirus 1</taxon>
    </lineage>
</organism>
<protein>
    <recommendedName>
        <fullName>Protein ORF D</fullName>
    </recommendedName>
</protein>
<accession>Q18LF0</accession>
<dbReference type="EMBL" id="AF322977">
    <property type="protein sequence ID" value="ABG36569.1"/>
    <property type="molecule type" value="Genomic_DNA"/>
</dbReference>
<sequence length="213" mass="24674">MAIPEAVTWDNLGSLMNNTQLNYFIPSHKNSIQYVCSDDKSRFSFVQCYLRILTLSIARFNEKSFDCSNQTIQNIYNLTMPGFFVQAPIPFCYDQNVANTKNCTLMLTSNDVMYWTYRQAVLNQPTFNNCMKPWKYIKFLSEKITNVNLTASQNIANSTMNFINRYINSSISMEKFLLTTIYNMAQPLGPRCSVEGLFSLSHYANKRLTERKN</sequence>
<reference key="1">
    <citation type="journal article" date="2007" name="J. Virol.">
        <title>Identification of novel rodent herpesviruses, including the first gammaherpesvirus of Mus musculus.</title>
        <authorList>
            <person name="Ehlers B."/>
            <person name="Kuchler J."/>
            <person name="Yasmum N."/>
            <person name="Dural G."/>
            <person name="Voigt S."/>
            <person name="Schmidt-Chanasit J."/>
            <person name="Jakel T."/>
            <person name="Matuschka F.R."/>
            <person name="Richter D."/>
            <person name="Essbauer S."/>
            <person name="Hughes D.J."/>
            <person name="Summers C."/>
            <person name="Bennett M."/>
            <person name="Stewart J.P."/>
            <person name="Ulrich R.G."/>
        </authorList>
    </citation>
    <scope>NUCLEOTIDE SEQUENCE [GENOMIC DNA]</scope>
</reference>
<reference key="2">
    <citation type="journal article" date="2001" name="J. Gen. Virol.">
        <title>Genetic and ultrastructural characterization of a European isolate of the fatal endotheliotropic elephant herpesvirus.</title>
        <authorList>
            <person name="Ehlers B."/>
            <person name="Burkhardt S."/>
            <person name="Goltz M."/>
            <person name="Bergmann V."/>
            <person name="Ochs A."/>
            <person name="Weiler H."/>
            <person name="Hentschke J."/>
        </authorList>
    </citation>
    <scope>NUCLEOTIDE SEQUENCE [GENOMIC DNA]</scope>
</reference>